<feature type="transit peptide" description="Chloroplast" evidence="1">
    <location>
        <begin position="1" status="less than"/>
        <end position="31"/>
    </location>
</feature>
<feature type="chain" id="PRO_0000029573" description="Oxygen-evolving enhancer protein 2, chloroplastic">
    <location>
        <begin position="32"/>
        <end position="217"/>
    </location>
</feature>
<feature type="modified residue" description="Phosphoserine" evidence="2">
    <location>
        <position position="107"/>
    </location>
</feature>
<feature type="non-terminal residue">
    <location>
        <position position="1"/>
    </location>
</feature>
<dbReference type="EMBL" id="Y08886">
    <property type="protein sequence ID" value="CAA70099.1"/>
    <property type="molecule type" value="mRNA"/>
</dbReference>
<dbReference type="SMR" id="Q96334"/>
<dbReference type="GO" id="GO:0009535">
    <property type="term" value="C:chloroplast thylakoid membrane"/>
    <property type="evidence" value="ECO:0007669"/>
    <property type="project" value="UniProtKB-SubCell"/>
</dbReference>
<dbReference type="GO" id="GO:0019898">
    <property type="term" value="C:extrinsic component of membrane"/>
    <property type="evidence" value="ECO:0007669"/>
    <property type="project" value="InterPro"/>
</dbReference>
<dbReference type="GO" id="GO:0009654">
    <property type="term" value="C:photosystem II oxygen evolving complex"/>
    <property type="evidence" value="ECO:0007669"/>
    <property type="project" value="InterPro"/>
</dbReference>
<dbReference type="GO" id="GO:0005509">
    <property type="term" value="F:calcium ion binding"/>
    <property type="evidence" value="ECO:0007669"/>
    <property type="project" value="InterPro"/>
</dbReference>
<dbReference type="GO" id="GO:0015979">
    <property type="term" value="P:photosynthesis"/>
    <property type="evidence" value="ECO:0007669"/>
    <property type="project" value="UniProtKB-KW"/>
</dbReference>
<dbReference type="FunFam" id="3.40.1000.10:FF:000005">
    <property type="entry name" value="Oxygen-evolving enhancer protein 2"/>
    <property type="match status" value="1"/>
</dbReference>
<dbReference type="Gene3D" id="3.40.1000.10">
    <property type="entry name" value="Mog1/PsbP, alpha/beta/alpha sandwich"/>
    <property type="match status" value="1"/>
</dbReference>
<dbReference type="InterPro" id="IPR016123">
    <property type="entry name" value="Mog1/PsbP_a/b/a-sand"/>
</dbReference>
<dbReference type="InterPro" id="IPR002683">
    <property type="entry name" value="PsbP_C"/>
</dbReference>
<dbReference type="PANTHER" id="PTHR31407">
    <property type="match status" value="1"/>
</dbReference>
<dbReference type="PANTHER" id="PTHR31407:SF6">
    <property type="entry name" value="OXYGEN-EVOLVING ENHANCER PROTEIN 2-1, CHLOROPLASTIC"/>
    <property type="match status" value="1"/>
</dbReference>
<dbReference type="Pfam" id="PF01789">
    <property type="entry name" value="PsbP"/>
    <property type="match status" value="1"/>
</dbReference>
<dbReference type="SUPFAM" id="SSF55724">
    <property type="entry name" value="Mog1p/PsbP-like"/>
    <property type="match status" value="1"/>
</dbReference>
<sequence length="217" mass="23348">EDDTSTVSRRLALTLLVGAAAVGSKVSPADAAYGEAANVFGKPKTNTDFTAINGDGFQVQVPAKWNPSREVEYPGQVLRYEDNFDATSNLNVMVTPTDKKSITDYGSPEEFLSQVNYLLGKQAYFGETACEGGFDNNAVATANILETNIQDVGGKPYYYLSVLTRTADEDEGGKHQLITATVNGGKLYICKAQAGDKRWFKGANKFVEKAATSFSVA</sequence>
<gene>
    <name type="primary">PSBP</name>
</gene>
<evidence type="ECO:0000250" key="1"/>
<evidence type="ECO:0000250" key="2">
    <source>
        <dbReference type="UniProtKB" id="Q42029"/>
    </source>
</evidence>
<evidence type="ECO:0000305" key="3"/>
<proteinExistence type="evidence at transcript level"/>
<organism>
    <name type="scientific">Brassica juncea</name>
    <name type="common">Indian mustard</name>
    <name type="synonym">Sinapis juncea</name>
    <dbReference type="NCBI Taxonomy" id="3707"/>
    <lineage>
        <taxon>Eukaryota</taxon>
        <taxon>Viridiplantae</taxon>
        <taxon>Streptophyta</taxon>
        <taxon>Embryophyta</taxon>
        <taxon>Tracheophyta</taxon>
        <taxon>Spermatophyta</taxon>
        <taxon>Magnoliopsida</taxon>
        <taxon>eudicotyledons</taxon>
        <taxon>Gunneridae</taxon>
        <taxon>Pentapetalae</taxon>
        <taxon>rosids</taxon>
        <taxon>malvids</taxon>
        <taxon>Brassicales</taxon>
        <taxon>Brassicaceae</taxon>
        <taxon>Brassiceae</taxon>
        <taxon>Brassica</taxon>
    </lineage>
</organism>
<reference key="1">
    <citation type="submission" date="1996-10" db="EMBL/GenBank/DDBJ databases">
        <authorList>
            <person name="Liu J.J."/>
            <person name="Pua E.C."/>
        </authorList>
    </citation>
    <scope>NUCLEOTIDE SEQUENCE [MRNA]</scope>
    <source>
        <tissue>Leaf</tissue>
    </source>
</reference>
<keyword id="KW-0150">Chloroplast</keyword>
<keyword id="KW-0472">Membrane</keyword>
<keyword id="KW-0597">Phosphoprotein</keyword>
<keyword id="KW-0602">Photosynthesis</keyword>
<keyword id="KW-0604">Photosystem II</keyword>
<keyword id="KW-0934">Plastid</keyword>
<keyword id="KW-0793">Thylakoid</keyword>
<keyword id="KW-0809">Transit peptide</keyword>
<protein>
    <recommendedName>
        <fullName>Oxygen-evolving enhancer protein 2, chloroplastic</fullName>
        <shortName>OEE2</shortName>
    </recommendedName>
    <alternativeName>
        <fullName>23 kDa subunit of oxygen evolving system of photosystem II</fullName>
    </alternativeName>
    <alternativeName>
        <fullName>23 kDa thylakoid membrane protein</fullName>
    </alternativeName>
    <alternativeName>
        <fullName>OEC 23 kDa subunit</fullName>
    </alternativeName>
</protein>
<accession>Q96334</accession>
<comment type="function">
    <text>May be involved in the regulation of photosystem II.</text>
</comment>
<comment type="subcellular location">
    <subcellularLocation>
        <location>Plastid</location>
        <location>Chloroplast thylakoid membrane</location>
    </subcellularLocation>
    <text>Associated with the photosystem II complex.</text>
</comment>
<comment type="similarity">
    <text evidence="3">Belongs to the PsbP family.</text>
</comment>
<name>PSBP_BRAJU</name>